<keyword id="KW-0686">Riboflavin biosynthesis</keyword>
<keyword id="KW-0808">Transferase</keyword>
<organism>
    <name type="scientific">Shewanella sp. (strain W3-18-1)</name>
    <dbReference type="NCBI Taxonomy" id="351745"/>
    <lineage>
        <taxon>Bacteria</taxon>
        <taxon>Pseudomonadati</taxon>
        <taxon>Pseudomonadota</taxon>
        <taxon>Gammaproteobacteria</taxon>
        <taxon>Alteromonadales</taxon>
        <taxon>Shewanellaceae</taxon>
        <taxon>Shewanella</taxon>
    </lineage>
</organism>
<proteinExistence type="inferred from homology"/>
<reference key="1">
    <citation type="submission" date="2006-12" db="EMBL/GenBank/DDBJ databases">
        <title>Complete sequence of Shewanella sp. W3-18-1.</title>
        <authorList>
            <consortium name="US DOE Joint Genome Institute"/>
            <person name="Copeland A."/>
            <person name="Lucas S."/>
            <person name="Lapidus A."/>
            <person name="Barry K."/>
            <person name="Detter J.C."/>
            <person name="Glavina del Rio T."/>
            <person name="Hammon N."/>
            <person name="Israni S."/>
            <person name="Dalin E."/>
            <person name="Tice H."/>
            <person name="Pitluck S."/>
            <person name="Chain P."/>
            <person name="Malfatti S."/>
            <person name="Shin M."/>
            <person name="Vergez L."/>
            <person name="Schmutz J."/>
            <person name="Larimer F."/>
            <person name="Land M."/>
            <person name="Hauser L."/>
            <person name="Kyrpides N."/>
            <person name="Lykidis A."/>
            <person name="Tiedje J."/>
            <person name="Richardson P."/>
        </authorList>
    </citation>
    <scope>NUCLEOTIDE SEQUENCE [LARGE SCALE GENOMIC DNA]</scope>
    <source>
        <strain>W3-18-1</strain>
    </source>
</reference>
<feature type="chain" id="PRO_1000040515" description="6,7-dimethyl-8-ribityllumazine synthase">
    <location>
        <begin position="1"/>
        <end position="158"/>
    </location>
</feature>
<feature type="active site" description="Proton donor" evidence="1">
    <location>
        <position position="89"/>
    </location>
</feature>
<feature type="binding site" evidence="1">
    <location>
        <position position="22"/>
    </location>
    <ligand>
        <name>5-amino-6-(D-ribitylamino)uracil</name>
        <dbReference type="ChEBI" id="CHEBI:15934"/>
    </ligand>
</feature>
<feature type="binding site" evidence="1">
    <location>
        <begin position="57"/>
        <end position="59"/>
    </location>
    <ligand>
        <name>5-amino-6-(D-ribitylamino)uracil</name>
        <dbReference type="ChEBI" id="CHEBI:15934"/>
    </ligand>
</feature>
<feature type="binding site" evidence="1">
    <location>
        <begin position="81"/>
        <end position="83"/>
    </location>
    <ligand>
        <name>5-amino-6-(D-ribitylamino)uracil</name>
        <dbReference type="ChEBI" id="CHEBI:15934"/>
    </ligand>
</feature>
<feature type="binding site" evidence="1">
    <location>
        <begin position="86"/>
        <end position="87"/>
    </location>
    <ligand>
        <name>(2S)-2-hydroxy-3-oxobutyl phosphate</name>
        <dbReference type="ChEBI" id="CHEBI:58830"/>
    </ligand>
</feature>
<feature type="binding site" evidence="1">
    <location>
        <position position="114"/>
    </location>
    <ligand>
        <name>5-amino-6-(D-ribitylamino)uracil</name>
        <dbReference type="ChEBI" id="CHEBI:15934"/>
    </ligand>
</feature>
<feature type="binding site" evidence="1">
    <location>
        <position position="128"/>
    </location>
    <ligand>
        <name>(2S)-2-hydroxy-3-oxobutyl phosphate</name>
        <dbReference type="ChEBI" id="CHEBI:58830"/>
    </ligand>
</feature>
<name>RISB_SHESW</name>
<sequence>MNIVQGNIEAKNAKVAIVISRFNSFLVESLLEGALDTLKRFGQVSDDNITVVRVPGAVELPLAARRVAASGKFDGIIALGAVIRGGTPHFDFVAGECNKGLAQVALEFDLPVAFGVLTTDTIEQAIERSGTKAGNKGGEAALSLLEMVNVLQELEQQL</sequence>
<evidence type="ECO:0000255" key="1">
    <source>
        <dbReference type="HAMAP-Rule" id="MF_00178"/>
    </source>
</evidence>
<dbReference type="EC" id="2.5.1.78" evidence="1"/>
<dbReference type="EMBL" id="CP000503">
    <property type="protein sequence ID" value="ABM24080.1"/>
    <property type="molecule type" value="Genomic_DNA"/>
</dbReference>
<dbReference type="SMR" id="A1RHD5"/>
<dbReference type="KEGG" id="shw:Sputw3181_1237"/>
<dbReference type="HOGENOM" id="CLU_089358_1_1_6"/>
<dbReference type="UniPathway" id="UPA00275">
    <property type="reaction ID" value="UER00404"/>
</dbReference>
<dbReference type="Proteomes" id="UP000002597">
    <property type="component" value="Chromosome"/>
</dbReference>
<dbReference type="GO" id="GO:0005829">
    <property type="term" value="C:cytosol"/>
    <property type="evidence" value="ECO:0007669"/>
    <property type="project" value="TreeGrafter"/>
</dbReference>
<dbReference type="GO" id="GO:0009349">
    <property type="term" value="C:riboflavin synthase complex"/>
    <property type="evidence" value="ECO:0007669"/>
    <property type="project" value="InterPro"/>
</dbReference>
<dbReference type="GO" id="GO:0000906">
    <property type="term" value="F:6,7-dimethyl-8-ribityllumazine synthase activity"/>
    <property type="evidence" value="ECO:0007669"/>
    <property type="project" value="UniProtKB-UniRule"/>
</dbReference>
<dbReference type="GO" id="GO:0009231">
    <property type="term" value="P:riboflavin biosynthetic process"/>
    <property type="evidence" value="ECO:0007669"/>
    <property type="project" value="UniProtKB-UniRule"/>
</dbReference>
<dbReference type="CDD" id="cd09209">
    <property type="entry name" value="Lumazine_synthase-I"/>
    <property type="match status" value="1"/>
</dbReference>
<dbReference type="FunFam" id="3.40.50.960:FF:000001">
    <property type="entry name" value="6,7-dimethyl-8-ribityllumazine synthase"/>
    <property type="match status" value="1"/>
</dbReference>
<dbReference type="Gene3D" id="3.40.50.960">
    <property type="entry name" value="Lumazine/riboflavin synthase"/>
    <property type="match status" value="1"/>
</dbReference>
<dbReference type="HAMAP" id="MF_00178">
    <property type="entry name" value="Lumazine_synth"/>
    <property type="match status" value="1"/>
</dbReference>
<dbReference type="InterPro" id="IPR034964">
    <property type="entry name" value="LS"/>
</dbReference>
<dbReference type="InterPro" id="IPR002180">
    <property type="entry name" value="LS/RS"/>
</dbReference>
<dbReference type="InterPro" id="IPR036467">
    <property type="entry name" value="LS/RS_sf"/>
</dbReference>
<dbReference type="NCBIfam" id="TIGR00114">
    <property type="entry name" value="lumazine-synth"/>
    <property type="match status" value="1"/>
</dbReference>
<dbReference type="NCBIfam" id="NF000812">
    <property type="entry name" value="PRK00061.1-4"/>
    <property type="match status" value="1"/>
</dbReference>
<dbReference type="PANTHER" id="PTHR21058:SF0">
    <property type="entry name" value="6,7-DIMETHYL-8-RIBITYLLUMAZINE SYNTHASE"/>
    <property type="match status" value="1"/>
</dbReference>
<dbReference type="PANTHER" id="PTHR21058">
    <property type="entry name" value="6,7-DIMETHYL-8-RIBITYLLUMAZINE SYNTHASE DMRL SYNTHASE LUMAZINE SYNTHASE"/>
    <property type="match status" value="1"/>
</dbReference>
<dbReference type="Pfam" id="PF00885">
    <property type="entry name" value="DMRL_synthase"/>
    <property type="match status" value="1"/>
</dbReference>
<dbReference type="SUPFAM" id="SSF52121">
    <property type="entry name" value="Lumazine synthase"/>
    <property type="match status" value="1"/>
</dbReference>
<protein>
    <recommendedName>
        <fullName evidence="1">6,7-dimethyl-8-ribityllumazine synthase</fullName>
        <shortName evidence="1">DMRL synthase</shortName>
        <shortName evidence="1">LS</shortName>
        <shortName evidence="1">Lumazine synthase</shortName>
        <ecNumber evidence="1">2.5.1.78</ecNumber>
    </recommendedName>
</protein>
<comment type="function">
    <text evidence="1">Catalyzes the formation of 6,7-dimethyl-8-ribityllumazine by condensation of 5-amino-6-(D-ribitylamino)uracil with 3,4-dihydroxy-2-butanone 4-phosphate. This is the penultimate step in the biosynthesis of riboflavin.</text>
</comment>
<comment type="catalytic activity">
    <reaction evidence="1">
        <text>(2S)-2-hydroxy-3-oxobutyl phosphate + 5-amino-6-(D-ribitylamino)uracil = 6,7-dimethyl-8-(1-D-ribityl)lumazine + phosphate + 2 H2O + H(+)</text>
        <dbReference type="Rhea" id="RHEA:26152"/>
        <dbReference type="ChEBI" id="CHEBI:15377"/>
        <dbReference type="ChEBI" id="CHEBI:15378"/>
        <dbReference type="ChEBI" id="CHEBI:15934"/>
        <dbReference type="ChEBI" id="CHEBI:43474"/>
        <dbReference type="ChEBI" id="CHEBI:58201"/>
        <dbReference type="ChEBI" id="CHEBI:58830"/>
        <dbReference type="EC" id="2.5.1.78"/>
    </reaction>
</comment>
<comment type="pathway">
    <text evidence="1">Cofactor biosynthesis; riboflavin biosynthesis; riboflavin from 2-hydroxy-3-oxobutyl phosphate and 5-amino-6-(D-ribitylamino)uracil: step 1/2.</text>
</comment>
<comment type="subunit">
    <text evidence="1">Forms an icosahedral capsid composed of 60 subunits, arranged as a dodecamer of pentamers.</text>
</comment>
<comment type="similarity">
    <text evidence="1">Belongs to the DMRL synthase family.</text>
</comment>
<gene>
    <name evidence="1" type="primary">ribH</name>
    <name type="ordered locus">Sputw3181_1237</name>
</gene>
<accession>A1RHD5</accession>